<comment type="function">
    <text evidence="1">Catalyzes the initial step of the lipid cycle reactions in the biosynthesis of the cell wall peptidoglycan: transfers peptidoglycan precursor phospho-MurNAc-pentapeptide from UDP-MurNAc-pentapeptide onto the lipid carrier undecaprenyl phosphate, yielding undecaprenyl-pyrophosphoryl-MurNAc-pentapeptide, known as lipid I.</text>
</comment>
<comment type="catalytic activity">
    <reaction evidence="1">
        <text>UDP-N-acetyl-alpha-D-muramoyl-L-alanyl-gamma-D-glutamyl-meso-2,6-diaminopimeloyl-D-alanyl-D-alanine + di-trans,octa-cis-undecaprenyl phosphate = di-trans,octa-cis-undecaprenyl diphospho-N-acetyl-alpha-D-muramoyl-L-alanyl-D-glutamyl-meso-2,6-diaminopimeloyl-D-alanyl-D-alanine + UMP</text>
        <dbReference type="Rhea" id="RHEA:28386"/>
        <dbReference type="ChEBI" id="CHEBI:57865"/>
        <dbReference type="ChEBI" id="CHEBI:60392"/>
        <dbReference type="ChEBI" id="CHEBI:61386"/>
        <dbReference type="ChEBI" id="CHEBI:61387"/>
        <dbReference type="EC" id="2.7.8.13"/>
    </reaction>
</comment>
<comment type="cofactor">
    <cofactor evidence="1">
        <name>Mg(2+)</name>
        <dbReference type="ChEBI" id="CHEBI:18420"/>
    </cofactor>
</comment>
<comment type="pathway">
    <text evidence="1">Cell wall biogenesis; peptidoglycan biosynthesis.</text>
</comment>
<comment type="subcellular location">
    <subcellularLocation>
        <location evidence="1">Cell inner membrane</location>
        <topology evidence="1">Multi-pass membrane protein</topology>
    </subcellularLocation>
</comment>
<comment type="similarity">
    <text evidence="1">Belongs to the glycosyltransferase 4 family. MraY subfamily.</text>
</comment>
<gene>
    <name evidence="1" type="primary">mraY</name>
    <name type="ordered locus">BUAPTUC7_217</name>
</gene>
<evidence type="ECO:0000255" key="1">
    <source>
        <dbReference type="HAMAP-Rule" id="MF_00038"/>
    </source>
</evidence>
<proteinExistence type="inferred from homology"/>
<sequence length="357" mass="40983">MLIFFNKYLHINLNILSYIPYRAIFSLLTSFFINLYIGPYFIYYFKKLQKYQIIRNNGPKTHYSKKNTPTMGGIFIIFSILFSTILYCNLSNIYIWYVISILIGYGLIGFIDDYKKIKYKNSQGLKLKWKYFFLSIIAFIFICMIKINNKDIISTELIIPFCIKNDFEINYLYVFLSYFVLVGTSNAVNLTDGLDGLAIMPVIFLTCGLTLISLFSDNINISHYLHVHYVKNSTELAILCMAIVGSGLGFLWFNSYPAKVFMGDVGSLALGGSLGAIAILLHQELLLIIMGGIFVFETISVILQIISFKIRKKRIFQMAPVHHHYEVKGILEPLIIVRFWIVSLILLLISLISLKVC</sequence>
<keyword id="KW-0131">Cell cycle</keyword>
<keyword id="KW-0132">Cell division</keyword>
<keyword id="KW-0997">Cell inner membrane</keyword>
<keyword id="KW-1003">Cell membrane</keyword>
<keyword id="KW-0133">Cell shape</keyword>
<keyword id="KW-0961">Cell wall biogenesis/degradation</keyword>
<keyword id="KW-0460">Magnesium</keyword>
<keyword id="KW-0472">Membrane</keyword>
<keyword id="KW-0479">Metal-binding</keyword>
<keyword id="KW-0573">Peptidoglycan synthesis</keyword>
<keyword id="KW-0808">Transferase</keyword>
<keyword id="KW-0812">Transmembrane</keyword>
<keyword id="KW-1133">Transmembrane helix</keyword>
<dbReference type="EC" id="2.7.8.13" evidence="1"/>
<dbReference type="EMBL" id="CP001158">
    <property type="protein sequence ID" value="ACL30037.1"/>
    <property type="molecule type" value="Genomic_DNA"/>
</dbReference>
<dbReference type="RefSeq" id="WP_012619473.1">
    <property type="nucleotide sequence ID" value="NC_011834.1"/>
</dbReference>
<dbReference type="SMR" id="B8D7C2"/>
<dbReference type="KEGG" id="bau:BUAPTUC7_217"/>
<dbReference type="HOGENOM" id="CLU_023982_0_0_6"/>
<dbReference type="UniPathway" id="UPA00219"/>
<dbReference type="GO" id="GO:0005886">
    <property type="term" value="C:plasma membrane"/>
    <property type="evidence" value="ECO:0007669"/>
    <property type="project" value="UniProtKB-SubCell"/>
</dbReference>
<dbReference type="GO" id="GO:0046872">
    <property type="term" value="F:metal ion binding"/>
    <property type="evidence" value="ECO:0007669"/>
    <property type="project" value="UniProtKB-KW"/>
</dbReference>
<dbReference type="GO" id="GO:0008963">
    <property type="term" value="F:phospho-N-acetylmuramoyl-pentapeptide-transferase activity"/>
    <property type="evidence" value="ECO:0007669"/>
    <property type="project" value="UniProtKB-UniRule"/>
</dbReference>
<dbReference type="GO" id="GO:0051992">
    <property type="term" value="F:UDP-N-acetylmuramoyl-L-alanyl-D-glutamyl-meso-2,6-diaminopimelyl-D-alanyl-D-alanine:undecaprenyl-phosphate transferase activity"/>
    <property type="evidence" value="ECO:0007669"/>
    <property type="project" value="RHEA"/>
</dbReference>
<dbReference type="GO" id="GO:0051301">
    <property type="term" value="P:cell division"/>
    <property type="evidence" value="ECO:0007669"/>
    <property type="project" value="UniProtKB-KW"/>
</dbReference>
<dbReference type="GO" id="GO:0071555">
    <property type="term" value="P:cell wall organization"/>
    <property type="evidence" value="ECO:0007669"/>
    <property type="project" value="UniProtKB-KW"/>
</dbReference>
<dbReference type="GO" id="GO:0009252">
    <property type="term" value="P:peptidoglycan biosynthetic process"/>
    <property type="evidence" value="ECO:0007669"/>
    <property type="project" value="UniProtKB-UniRule"/>
</dbReference>
<dbReference type="GO" id="GO:0008360">
    <property type="term" value="P:regulation of cell shape"/>
    <property type="evidence" value="ECO:0007669"/>
    <property type="project" value="UniProtKB-KW"/>
</dbReference>
<dbReference type="CDD" id="cd06852">
    <property type="entry name" value="GT_MraY"/>
    <property type="match status" value="1"/>
</dbReference>
<dbReference type="HAMAP" id="MF_00038">
    <property type="entry name" value="MraY"/>
    <property type="match status" value="1"/>
</dbReference>
<dbReference type="InterPro" id="IPR000715">
    <property type="entry name" value="Glycosyl_transferase_4"/>
</dbReference>
<dbReference type="InterPro" id="IPR003524">
    <property type="entry name" value="PNAcMuramoyl-5peptid_Trfase"/>
</dbReference>
<dbReference type="InterPro" id="IPR018480">
    <property type="entry name" value="PNAcMuramoyl-5peptid_Trfase_CS"/>
</dbReference>
<dbReference type="NCBIfam" id="TIGR00445">
    <property type="entry name" value="mraY"/>
    <property type="match status" value="1"/>
</dbReference>
<dbReference type="PANTHER" id="PTHR22926">
    <property type="entry name" value="PHOSPHO-N-ACETYLMURAMOYL-PENTAPEPTIDE-TRANSFERASE"/>
    <property type="match status" value="1"/>
</dbReference>
<dbReference type="PANTHER" id="PTHR22926:SF5">
    <property type="entry name" value="PHOSPHO-N-ACETYLMURAMOYL-PENTAPEPTIDE-TRANSFERASE HOMOLOG"/>
    <property type="match status" value="1"/>
</dbReference>
<dbReference type="Pfam" id="PF00953">
    <property type="entry name" value="Glycos_transf_4"/>
    <property type="match status" value="1"/>
</dbReference>
<dbReference type="Pfam" id="PF10555">
    <property type="entry name" value="MraY_sig1"/>
    <property type="match status" value="1"/>
</dbReference>
<dbReference type="PROSITE" id="PS01347">
    <property type="entry name" value="MRAY_1"/>
    <property type="match status" value="1"/>
</dbReference>
<dbReference type="PROSITE" id="PS01348">
    <property type="entry name" value="MRAY_2"/>
    <property type="match status" value="1"/>
</dbReference>
<organism>
    <name type="scientific">Buchnera aphidicola subsp. Acyrthosiphon pisum (strain Tuc7)</name>
    <dbReference type="NCBI Taxonomy" id="561501"/>
    <lineage>
        <taxon>Bacteria</taxon>
        <taxon>Pseudomonadati</taxon>
        <taxon>Pseudomonadota</taxon>
        <taxon>Gammaproteobacteria</taxon>
        <taxon>Enterobacterales</taxon>
        <taxon>Erwiniaceae</taxon>
        <taxon>Buchnera</taxon>
    </lineage>
</organism>
<reference key="1">
    <citation type="journal article" date="2009" name="Science">
        <title>The dynamics and time scale of ongoing genomic erosion in symbiotic bacteria.</title>
        <authorList>
            <person name="Moran N.A."/>
            <person name="McLaughlin H.J."/>
            <person name="Sorek R."/>
        </authorList>
    </citation>
    <scope>NUCLEOTIDE SEQUENCE [LARGE SCALE GENOMIC DNA]</scope>
    <source>
        <strain>Tuc7</strain>
    </source>
</reference>
<name>MRAY_BUCAT</name>
<protein>
    <recommendedName>
        <fullName evidence="1">Phospho-N-acetylmuramoyl-pentapeptide-transferase</fullName>
        <ecNumber evidence="1">2.7.8.13</ecNumber>
    </recommendedName>
    <alternativeName>
        <fullName evidence="1">UDP-MurNAc-pentapeptide phosphotransferase</fullName>
    </alternativeName>
</protein>
<accession>B8D7C2</accession>
<feature type="chain" id="PRO_1000117169" description="Phospho-N-acetylmuramoyl-pentapeptide-transferase">
    <location>
        <begin position="1"/>
        <end position="357"/>
    </location>
</feature>
<feature type="transmembrane region" description="Helical" evidence="1">
    <location>
        <begin position="23"/>
        <end position="43"/>
    </location>
</feature>
<feature type="transmembrane region" description="Helical" evidence="1">
    <location>
        <begin position="70"/>
        <end position="90"/>
    </location>
</feature>
<feature type="transmembrane region" description="Helical" evidence="1">
    <location>
        <begin position="91"/>
        <end position="111"/>
    </location>
</feature>
<feature type="transmembrane region" description="Helical" evidence="1">
    <location>
        <begin position="127"/>
        <end position="147"/>
    </location>
</feature>
<feature type="transmembrane region" description="Helical" evidence="1">
    <location>
        <begin position="171"/>
        <end position="191"/>
    </location>
</feature>
<feature type="transmembrane region" description="Helical" evidence="1">
    <location>
        <begin position="196"/>
        <end position="216"/>
    </location>
</feature>
<feature type="transmembrane region" description="Helical" evidence="1">
    <location>
        <begin position="236"/>
        <end position="256"/>
    </location>
</feature>
<feature type="transmembrane region" description="Helical" evidence="1">
    <location>
        <begin position="260"/>
        <end position="280"/>
    </location>
</feature>
<feature type="transmembrane region" description="Helical" evidence="1">
    <location>
        <begin position="286"/>
        <end position="306"/>
    </location>
</feature>
<feature type="transmembrane region" description="Helical" evidence="1">
    <location>
        <begin position="334"/>
        <end position="354"/>
    </location>
</feature>